<dbReference type="EMBL" id="L12034">
    <property type="protein sequence ID" value="AAA31248.1"/>
    <property type="molecule type" value="mRNA"/>
</dbReference>
<dbReference type="PIR" id="I46711">
    <property type="entry name" value="I46711"/>
</dbReference>
<dbReference type="BMRB" id="P48799"/>
<dbReference type="SMR" id="P48799"/>
<dbReference type="CORUM" id="P48799"/>
<dbReference type="STRING" id="9986.ENSOCUP00000000416"/>
<dbReference type="PaxDb" id="9986-ENSOCUP00000000416"/>
<dbReference type="eggNOG" id="KOG3885">
    <property type="taxonomic scope" value="Eukaryota"/>
</dbReference>
<dbReference type="InParanoid" id="P48799"/>
<dbReference type="Proteomes" id="UP000001811">
    <property type="component" value="Unplaced"/>
</dbReference>
<dbReference type="GO" id="GO:0005576">
    <property type="term" value="C:extracellular region"/>
    <property type="evidence" value="ECO:0007669"/>
    <property type="project" value="UniProtKB-SubCell"/>
</dbReference>
<dbReference type="GO" id="GO:0005634">
    <property type="term" value="C:nucleus"/>
    <property type="evidence" value="ECO:0007669"/>
    <property type="project" value="UniProtKB-SubCell"/>
</dbReference>
<dbReference type="GO" id="GO:0008083">
    <property type="term" value="F:growth factor activity"/>
    <property type="evidence" value="ECO:0007669"/>
    <property type="project" value="UniProtKB-KW"/>
</dbReference>
<dbReference type="GO" id="GO:0008201">
    <property type="term" value="F:heparin binding"/>
    <property type="evidence" value="ECO:0007669"/>
    <property type="project" value="UniProtKB-KW"/>
</dbReference>
<dbReference type="GO" id="GO:0005178">
    <property type="term" value="F:integrin binding"/>
    <property type="evidence" value="ECO:0000250"/>
    <property type="project" value="UniProtKB"/>
</dbReference>
<dbReference type="GO" id="GO:0001525">
    <property type="term" value="P:angiogenesis"/>
    <property type="evidence" value="ECO:0007669"/>
    <property type="project" value="UniProtKB-KW"/>
</dbReference>
<dbReference type="GO" id="GO:0001658">
    <property type="term" value="P:branching involved in ureteric bud morphogenesis"/>
    <property type="evidence" value="ECO:0000250"/>
    <property type="project" value="UniProtKB"/>
</dbReference>
<dbReference type="GO" id="GO:0030154">
    <property type="term" value="P:cell differentiation"/>
    <property type="evidence" value="ECO:0007669"/>
    <property type="project" value="UniProtKB-KW"/>
</dbReference>
<dbReference type="GO" id="GO:0045766">
    <property type="term" value="P:positive regulation of angiogenesis"/>
    <property type="evidence" value="ECO:0000250"/>
    <property type="project" value="UniProtKB"/>
</dbReference>
<dbReference type="GO" id="GO:0043536">
    <property type="term" value="P:positive regulation of blood vessel endothelial cell migration"/>
    <property type="evidence" value="ECO:0000250"/>
    <property type="project" value="UniProtKB"/>
</dbReference>
<dbReference type="GO" id="GO:0051781">
    <property type="term" value="P:positive regulation of cell division"/>
    <property type="evidence" value="ECO:0007669"/>
    <property type="project" value="UniProtKB-KW"/>
</dbReference>
<dbReference type="GO" id="GO:0090050">
    <property type="term" value="P:positive regulation of cell migration involved in sprouting angiogenesis"/>
    <property type="evidence" value="ECO:0000250"/>
    <property type="project" value="UniProtKB"/>
</dbReference>
<dbReference type="GO" id="GO:0070374">
    <property type="term" value="P:positive regulation of ERK1 and ERK2 cascade"/>
    <property type="evidence" value="ECO:0000250"/>
    <property type="project" value="UniProtKB"/>
</dbReference>
<dbReference type="GO" id="GO:1902748">
    <property type="term" value="P:positive regulation of lens fiber cell differentiation"/>
    <property type="evidence" value="ECO:0000250"/>
    <property type="project" value="UniProtKB"/>
</dbReference>
<dbReference type="GO" id="GO:0001934">
    <property type="term" value="P:positive regulation of protein phosphorylation"/>
    <property type="evidence" value="ECO:0000250"/>
    <property type="project" value="UniProtKB"/>
</dbReference>
<dbReference type="GO" id="GO:1903672">
    <property type="term" value="P:positive regulation of sprouting angiogenesis"/>
    <property type="evidence" value="ECO:0000250"/>
    <property type="project" value="UniProtKB"/>
</dbReference>
<dbReference type="CDD" id="cd23314">
    <property type="entry name" value="beta-trefoil_FGF2"/>
    <property type="match status" value="1"/>
</dbReference>
<dbReference type="FunFam" id="2.80.10.50:FF:000020">
    <property type="entry name" value="Fibroblast growth factor 1"/>
    <property type="match status" value="1"/>
</dbReference>
<dbReference type="Gene3D" id="2.80.10.50">
    <property type="match status" value="1"/>
</dbReference>
<dbReference type="InterPro" id="IPR002209">
    <property type="entry name" value="Fibroblast_GF_fam"/>
</dbReference>
<dbReference type="InterPro" id="IPR008996">
    <property type="entry name" value="IL1/FGF"/>
</dbReference>
<dbReference type="PANTHER" id="PTHR11486">
    <property type="entry name" value="FIBROBLAST GROWTH FACTOR"/>
    <property type="match status" value="1"/>
</dbReference>
<dbReference type="Pfam" id="PF00167">
    <property type="entry name" value="FGF"/>
    <property type="match status" value="1"/>
</dbReference>
<dbReference type="PRINTS" id="PR00263">
    <property type="entry name" value="HBGFFGF"/>
</dbReference>
<dbReference type="PRINTS" id="PR00262">
    <property type="entry name" value="IL1HBGF"/>
</dbReference>
<dbReference type="SMART" id="SM00442">
    <property type="entry name" value="FGF"/>
    <property type="match status" value="1"/>
</dbReference>
<dbReference type="SUPFAM" id="SSF50353">
    <property type="entry name" value="Cytokine"/>
    <property type="match status" value="1"/>
</dbReference>
<dbReference type="PROSITE" id="PS00247">
    <property type="entry name" value="HBGF_FGF"/>
    <property type="match status" value="1"/>
</dbReference>
<organism>
    <name type="scientific">Oryctolagus cuniculus</name>
    <name type="common">Rabbit</name>
    <dbReference type="NCBI Taxonomy" id="9986"/>
    <lineage>
        <taxon>Eukaryota</taxon>
        <taxon>Metazoa</taxon>
        <taxon>Chordata</taxon>
        <taxon>Craniata</taxon>
        <taxon>Vertebrata</taxon>
        <taxon>Euteleostomi</taxon>
        <taxon>Mammalia</taxon>
        <taxon>Eutheria</taxon>
        <taxon>Euarchontoglires</taxon>
        <taxon>Glires</taxon>
        <taxon>Lagomorpha</taxon>
        <taxon>Leporidae</taxon>
        <taxon>Oryctolagus</taxon>
    </lineage>
</organism>
<comment type="function">
    <text evidence="2">Acts as a ligand for FGFR1, FGFR2, FGFR3 and FGFR4 (By similarity). Also acts as an integrin ligand which is required for FGF2 signaling (By similarity). Binds to integrin ITGAV:ITGB3 (By similarity). Plays an important role in the regulation of cell survival, cell division, cell differentiation and cell migration (By similarity). Functions as a potent mitogen in vitro (By similarity). Can induce angiogenesis (By similarity). Mediates phosphorylation of ERK1/2 and thereby promotes retinal lens fiber differentiation (By similarity).</text>
</comment>
<comment type="subunit">
    <text evidence="2 3 4">Monomer. Homodimer. Interacts with FGFR1, FGFR2, FGFR3 and FGFR4. Affinity between fibroblast growth factors (FGFs) and their receptors is increased by heparan sulfate glycosaminoglycans that function as coreceptors. Interacts with CSPG4, FGFBP1 and TEC. Found in a complex with FGFBP1, FGF1 and FGF2. Interacts with FGFBP3. Interacts with integrin ITGAV:ITGB3; the interaction is required for FGF2 signaling. Interacts with SNORC (via the extracellular domain). Interacts with glypican GPC3.</text>
</comment>
<comment type="subcellular location">
    <subcellularLocation>
        <location evidence="2">Secreted</location>
    </subcellularLocation>
    <subcellularLocation>
        <location evidence="2">Nucleus</location>
    </subcellularLocation>
    <text evidence="2">Exported from cells by an endoplasmic reticulum (ER)/Golgi-independent mechanism (By similarity). Unconventional secretion of FGF2 occurs by direct translocation across the plasma membrane (By similarity). Binding of exogenous FGF2 to FGFR facilitates endocytosis followed by translocation of FGF2 across endosomal membrane into the cytosol (By similarity). Nuclear import from the cytosol requires the classical nuclear import machinery, involving proteins KPNA1 and KPNB1, as well as CEP57 (By similarity).</text>
</comment>
<comment type="PTM">
    <text evidence="1">Phosphorylation at Tyr-73 regulates FGF2 unconventional secretion.</text>
</comment>
<comment type="similarity">
    <text evidence="5">Belongs to the heparin-binding growth factors family.</text>
</comment>
<feature type="chain" id="PRO_0000147600" description="Fibroblast growth factor 2">
    <location>
        <begin position="1"/>
        <end position="137" status="greater than"/>
    </location>
</feature>
<feature type="region of interest" description="Heparin-binding" evidence="1">
    <location>
        <begin position="119"/>
        <end position="135"/>
    </location>
</feature>
<feature type="binding site" evidence="1">
    <location>
        <position position="27"/>
    </location>
    <ligand>
        <name>heparin</name>
        <dbReference type="ChEBI" id="CHEBI:28304"/>
    </ligand>
</feature>
<feature type="site" description="Important for interaction with integrin" evidence="2">
    <location>
        <position position="119"/>
    </location>
</feature>
<feature type="site" description="Important for interaction with integrin" evidence="2">
    <location>
        <position position="120"/>
    </location>
</feature>
<feature type="site" description="Important for interaction with integrin" evidence="2">
    <location>
        <position position="125"/>
    </location>
</feature>
<feature type="modified residue" description="Phosphotyrosine; by TEC" evidence="2">
    <location>
        <position position="73"/>
    </location>
</feature>
<feature type="cross-link" description="Glycyl lysine isopeptide (Lys-Gly) (interchain with G-Cter in SUMO1)" evidence="2">
    <location>
        <position position="86"/>
    </location>
</feature>
<feature type="non-terminal residue">
    <location>
        <position position="137"/>
    </location>
</feature>
<name>FGF2_RABIT</name>
<sequence>PALPEDGGSGAFPPGHFKDPKRLYCKNGGFFLRIHPDGRVDGVREKSDPHIKLQLQAEERGVVSIKGVCANRYLAMKEDGRLLASKCVTDECFFFERLESNNYNTYRSRKYSSWYVALKRTGQYKLGSKTGPGQKAI</sequence>
<proteinExistence type="evidence at transcript level"/>
<evidence type="ECO:0000250" key="1"/>
<evidence type="ECO:0000250" key="2">
    <source>
        <dbReference type="UniProtKB" id="P09038"/>
    </source>
</evidence>
<evidence type="ECO:0000250" key="3">
    <source>
        <dbReference type="UniProtKB" id="P13109"/>
    </source>
</evidence>
<evidence type="ECO:0000250" key="4">
    <source>
        <dbReference type="UniProtKB" id="P15655"/>
    </source>
</evidence>
<evidence type="ECO:0000305" key="5"/>
<protein>
    <recommendedName>
        <fullName>Fibroblast growth factor 2</fullName>
        <shortName>FGF-2</shortName>
    </recommendedName>
    <alternativeName>
        <fullName>Basic fibroblast growth factor</fullName>
        <shortName>bFGF</shortName>
    </alternativeName>
    <alternativeName>
        <fullName>Heparin-binding growth factor 2</fullName>
        <shortName>HBGF-2</shortName>
    </alternativeName>
</protein>
<accession>P48799</accession>
<reference key="1">
    <citation type="journal article" date="1993" name="Am. J. Pathol.">
        <title>Elevated expression of basic fibroblast growth factor in an immortalized rabbit smooth muscle cell line.</title>
        <authorList>
            <person name="Winkles J.A."/>
            <person name="Friesel R."/>
            <person name="Alberts G.F."/>
            <person name="Janat M.F."/>
            <person name="Liau G."/>
        </authorList>
    </citation>
    <scope>NUCLEOTIDE SEQUENCE [MRNA]</scope>
    <source>
        <strain>New Zealand white</strain>
        <tissue>Smooth muscle</tissue>
    </source>
</reference>
<keyword id="KW-0037">Angiogenesis</keyword>
<keyword id="KW-0217">Developmental protein</keyword>
<keyword id="KW-0221">Differentiation</keyword>
<keyword id="KW-0339">Growth factor</keyword>
<keyword id="KW-0358">Heparin-binding</keyword>
<keyword id="KW-1017">Isopeptide bond</keyword>
<keyword id="KW-0497">Mitogen</keyword>
<keyword id="KW-0539">Nucleus</keyword>
<keyword id="KW-0597">Phosphoprotein</keyword>
<keyword id="KW-1185">Reference proteome</keyword>
<keyword id="KW-0964">Secreted</keyword>
<keyword id="KW-0832">Ubl conjugation</keyword>
<gene>
    <name type="primary">FGF2</name>
</gene>